<evidence type="ECO:0000255" key="1">
    <source>
        <dbReference type="HAMAP-Rule" id="MF_00090"/>
    </source>
</evidence>
<gene>
    <name evidence="1" type="primary">pcm</name>
    <name type="ordered locus">MMP0102</name>
</gene>
<reference key="1">
    <citation type="journal article" date="2004" name="J. Bacteriol.">
        <title>Complete genome sequence of the genetically tractable hydrogenotrophic methanogen Methanococcus maripaludis.</title>
        <authorList>
            <person name="Hendrickson E.L."/>
            <person name="Kaul R."/>
            <person name="Zhou Y."/>
            <person name="Bovee D."/>
            <person name="Chapman P."/>
            <person name="Chung J."/>
            <person name="Conway de Macario E."/>
            <person name="Dodsworth J.A."/>
            <person name="Gillett W."/>
            <person name="Graham D.E."/>
            <person name="Hackett M."/>
            <person name="Haydock A.K."/>
            <person name="Kang A."/>
            <person name="Land M.L."/>
            <person name="Levy R."/>
            <person name="Lie T.J."/>
            <person name="Major T.A."/>
            <person name="Moore B.C."/>
            <person name="Porat I."/>
            <person name="Palmeiri A."/>
            <person name="Rouse G."/>
            <person name="Saenphimmachak C."/>
            <person name="Soell D."/>
            <person name="Van Dien S."/>
            <person name="Wang T."/>
            <person name="Whitman W.B."/>
            <person name="Xia Q."/>
            <person name="Zhang Y."/>
            <person name="Larimer F.W."/>
            <person name="Olson M.V."/>
            <person name="Leigh J.A."/>
        </authorList>
    </citation>
    <scope>NUCLEOTIDE SEQUENCE [LARGE SCALE GENOMIC DNA]</scope>
    <source>
        <strain>DSM 14266 / JCM 13030 / NBRC 101832 / S2 / LL</strain>
    </source>
</reference>
<dbReference type="EC" id="2.1.1.77" evidence="1"/>
<dbReference type="EMBL" id="BX950229">
    <property type="protein sequence ID" value="CAF29658.1"/>
    <property type="molecule type" value="Genomic_DNA"/>
</dbReference>
<dbReference type="RefSeq" id="WP_011170046.1">
    <property type="nucleotide sequence ID" value="NC_005791.1"/>
</dbReference>
<dbReference type="SMR" id="Q6M116"/>
<dbReference type="STRING" id="267377.MMP0102"/>
<dbReference type="EnsemblBacteria" id="CAF29658">
    <property type="protein sequence ID" value="CAF29658"/>
    <property type="gene ID" value="MMP0102"/>
</dbReference>
<dbReference type="GeneID" id="2762127"/>
<dbReference type="KEGG" id="mmp:MMP0102"/>
<dbReference type="PATRIC" id="fig|267377.15.peg.103"/>
<dbReference type="eggNOG" id="arCOG00976">
    <property type="taxonomic scope" value="Archaea"/>
</dbReference>
<dbReference type="HOGENOM" id="CLU_055432_2_0_2"/>
<dbReference type="OrthoDB" id="33618at2157"/>
<dbReference type="Proteomes" id="UP000000590">
    <property type="component" value="Chromosome"/>
</dbReference>
<dbReference type="GO" id="GO:0005737">
    <property type="term" value="C:cytoplasm"/>
    <property type="evidence" value="ECO:0007669"/>
    <property type="project" value="UniProtKB-SubCell"/>
</dbReference>
<dbReference type="GO" id="GO:0004719">
    <property type="term" value="F:protein-L-isoaspartate (D-aspartate) O-methyltransferase activity"/>
    <property type="evidence" value="ECO:0007669"/>
    <property type="project" value="UniProtKB-UniRule"/>
</dbReference>
<dbReference type="GO" id="GO:0032259">
    <property type="term" value="P:methylation"/>
    <property type="evidence" value="ECO:0007669"/>
    <property type="project" value="UniProtKB-KW"/>
</dbReference>
<dbReference type="GO" id="GO:0036211">
    <property type="term" value="P:protein modification process"/>
    <property type="evidence" value="ECO:0007669"/>
    <property type="project" value="UniProtKB-UniRule"/>
</dbReference>
<dbReference type="GO" id="GO:0030091">
    <property type="term" value="P:protein repair"/>
    <property type="evidence" value="ECO:0007669"/>
    <property type="project" value="UniProtKB-UniRule"/>
</dbReference>
<dbReference type="CDD" id="cd02440">
    <property type="entry name" value="AdoMet_MTases"/>
    <property type="match status" value="1"/>
</dbReference>
<dbReference type="FunFam" id="3.40.50.150:FF:000010">
    <property type="entry name" value="Protein-L-isoaspartate O-methyltransferase"/>
    <property type="match status" value="1"/>
</dbReference>
<dbReference type="Gene3D" id="3.40.50.150">
    <property type="entry name" value="Vaccinia Virus protein VP39"/>
    <property type="match status" value="1"/>
</dbReference>
<dbReference type="HAMAP" id="MF_00090">
    <property type="entry name" value="PIMT"/>
    <property type="match status" value="1"/>
</dbReference>
<dbReference type="InterPro" id="IPR000682">
    <property type="entry name" value="PCMT"/>
</dbReference>
<dbReference type="InterPro" id="IPR029063">
    <property type="entry name" value="SAM-dependent_MTases_sf"/>
</dbReference>
<dbReference type="NCBIfam" id="TIGR00080">
    <property type="entry name" value="pimt"/>
    <property type="match status" value="1"/>
</dbReference>
<dbReference type="NCBIfam" id="NF001453">
    <property type="entry name" value="PRK00312.1"/>
    <property type="match status" value="1"/>
</dbReference>
<dbReference type="NCBIfam" id="NF010549">
    <property type="entry name" value="PRK13942.1"/>
    <property type="match status" value="1"/>
</dbReference>
<dbReference type="PANTHER" id="PTHR11579">
    <property type="entry name" value="PROTEIN-L-ISOASPARTATE O-METHYLTRANSFERASE"/>
    <property type="match status" value="1"/>
</dbReference>
<dbReference type="PANTHER" id="PTHR11579:SF0">
    <property type="entry name" value="PROTEIN-L-ISOASPARTATE(D-ASPARTATE) O-METHYLTRANSFERASE"/>
    <property type="match status" value="1"/>
</dbReference>
<dbReference type="Pfam" id="PF01135">
    <property type="entry name" value="PCMT"/>
    <property type="match status" value="1"/>
</dbReference>
<dbReference type="SUPFAM" id="SSF53335">
    <property type="entry name" value="S-adenosyl-L-methionine-dependent methyltransferases"/>
    <property type="match status" value="1"/>
</dbReference>
<dbReference type="PROSITE" id="PS01279">
    <property type="entry name" value="PCMT"/>
    <property type="match status" value="1"/>
</dbReference>
<proteinExistence type="inferred from homology"/>
<organism>
    <name type="scientific">Methanococcus maripaludis (strain DSM 14266 / JCM 13030 / NBRC 101832 / S2 / LL)</name>
    <dbReference type="NCBI Taxonomy" id="267377"/>
    <lineage>
        <taxon>Archaea</taxon>
        <taxon>Methanobacteriati</taxon>
        <taxon>Methanobacteriota</taxon>
        <taxon>Methanomada group</taxon>
        <taxon>Methanococci</taxon>
        <taxon>Methanococcales</taxon>
        <taxon>Methanococcaceae</taxon>
        <taxon>Methanococcus</taxon>
    </lineage>
</organism>
<keyword id="KW-0963">Cytoplasm</keyword>
<keyword id="KW-0489">Methyltransferase</keyword>
<keyword id="KW-1185">Reference proteome</keyword>
<keyword id="KW-0949">S-adenosyl-L-methionine</keyword>
<keyword id="KW-0808">Transferase</keyword>
<feature type="chain" id="PRO_0000111919" description="Protein-L-isoaspartate O-methyltransferase">
    <location>
        <begin position="1"/>
        <end position="212"/>
    </location>
</feature>
<feature type="active site" evidence="1">
    <location>
        <position position="60"/>
    </location>
</feature>
<name>PIMT_METMP</name>
<accession>Q6M116</accession>
<sequence length="212" mass="23108">MPLNEIIPVIENLISRGYIKKQSVIDAILSVPRHKFISKSMESYAYVDSPLEIGYGQTISAIHMVGIMCEELDLDEGQNVLEVGTGSGYHAAVVSKIVGESGKVTTIERIPELFENSKKTLSELGYNNVEVVLGDGTKGYLENAPYDRIYVTASGPDVPKALFKQLNDGGILLAPVGAHFQTLMRYTKINGSISEEKLLEVAFVPLIGENGF</sequence>
<comment type="function">
    <text evidence="1">Catalyzes the methyl esterification of L-isoaspartyl residues in peptides and proteins that result from spontaneous decomposition of normal L-aspartyl and L-asparaginyl residues. It plays a role in the repair and/or degradation of damaged proteins.</text>
</comment>
<comment type="catalytic activity">
    <reaction evidence="1">
        <text>[protein]-L-isoaspartate + S-adenosyl-L-methionine = [protein]-L-isoaspartate alpha-methyl ester + S-adenosyl-L-homocysteine</text>
        <dbReference type="Rhea" id="RHEA:12705"/>
        <dbReference type="Rhea" id="RHEA-COMP:12143"/>
        <dbReference type="Rhea" id="RHEA-COMP:12144"/>
        <dbReference type="ChEBI" id="CHEBI:57856"/>
        <dbReference type="ChEBI" id="CHEBI:59789"/>
        <dbReference type="ChEBI" id="CHEBI:90596"/>
        <dbReference type="ChEBI" id="CHEBI:90598"/>
        <dbReference type="EC" id="2.1.1.77"/>
    </reaction>
</comment>
<comment type="subcellular location">
    <subcellularLocation>
        <location evidence="1">Cytoplasm</location>
    </subcellularLocation>
</comment>
<comment type="similarity">
    <text evidence="1">Belongs to the methyltransferase superfamily. L-isoaspartyl/D-aspartyl protein methyltransferase family.</text>
</comment>
<protein>
    <recommendedName>
        <fullName evidence="1">Protein-L-isoaspartate O-methyltransferase</fullName>
        <ecNumber evidence="1">2.1.1.77</ecNumber>
    </recommendedName>
    <alternativeName>
        <fullName evidence="1">L-isoaspartyl protein carboxyl methyltransferase</fullName>
    </alternativeName>
    <alternativeName>
        <fullName evidence="1">Protein L-isoaspartyl methyltransferase</fullName>
    </alternativeName>
    <alternativeName>
        <fullName evidence="1">Protein-beta-aspartate methyltransferase</fullName>
        <shortName evidence="1">PIMT</shortName>
    </alternativeName>
</protein>